<organism>
    <name type="scientific">Tetraodon nigroviridis</name>
    <name type="common">Spotted green pufferfish</name>
    <name type="synonym">Chelonodon nigroviridis</name>
    <dbReference type="NCBI Taxonomy" id="99883"/>
    <lineage>
        <taxon>Eukaryota</taxon>
        <taxon>Metazoa</taxon>
        <taxon>Chordata</taxon>
        <taxon>Craniata</taxon>
        <taxon>Vertebrata</taxon>
        <taxon>Euteleostomi</taxon>
        <taxon>Actinopterygii</taxon>
        <taxon>Neopterygii</taxon>
        <taxon>Teleostei</taxon>
        <taxon>Neoteleostei</taxon>
        <taxon>Acanthomorphata</taxon>
        <taxon>Eupercaria</taxon>
        <taxon>Tetraodontiformes</taxon>
        <taxon>Tetradontoidea</taxon>
        <taxon>Tetraodontidae</taxon>
        <taxon>Tetraodon</taxon>
    </lineage>
</organism>
<sequence>MTYVMSLFLLGLVLGLVAVASNPSPYFGALSLVGVAAFGCGVLIWHGGSFLSLVLFLIYLGGMLVVFAYSAALAAEPYPETLGSWPVVSVYFGYFFFVFGILYTNMVLDEEVWWGVSGEMDWDAVFRGDMDGVSLMYSSGGGVLLLGAWVLLLTLLVVLELVRGLGRGALRAV</sequence>
<gene>
    <name type="primary">MT-ND6</name>
    <name type="synonym">MTND6</name>
    <name type="synonym">NADH6</name>
    <name type="synonym">ND6</name>
</gene>
<feature type="chain" id="PRO_0000118342" description="NADH-ubiquinone oxidoreductase chain 6">
    <location>
        <begin position="1"/>
        <end position="173"/>
    </location>
</feature>
<feature type="transmembrane region" description="Helical" evidence="2">
    <location>
        <begin position="1"/>
        <end position="21"/>
    </location>
</feature>
<feature type="transmembrane region" description="Helical" evidence="2">
    <location>
        <begin position="25"/>
        <end position="45"/>
    </location>
</feature>
<feature type="transmembrane region" description="Helical" evidence="2">
    <location>
        <begin position="53"/>
        <end position="73"/>
    </location>
</feature>
<feature type="transmembrane region" description="Helical" evidence="2">
    <location>
        <begin position="82"/>
        <end position="102"/>
    </location>
</feature>
<feature type="transmembrane region" description="Helical" evidence="2">
    <location>
        <begin position="142"/>
        <end position="162"/>
    </location>
</feature>
<accession>Q4JQH6</accession>
<evidence type="ECO:0000250" key="1"/>
<evidence type="ECO:0000255" key="2"/>
<evidence type="ECO:0000305" key="3"/>
<keyword id="KW-0249">Electron transport</keyword>
<keyword id="KW-0472">Membrane</keyword>
<keyword id="KW-0496">Mitochondrion</keyword>
<keyword id="KW-0520">NAD</keyword>
<keyword id="KW-1185">Reference proteome</keyword>
<keyword id="KW-0679">Respiratory chain</keyword>
<keyword id="KW-1278">Translocase</keyword>
<keyword id="KW-0812">Transmembrane</keyword>
<keyword id="KW-1133">Transmembrane helix</keyword>
<keyword id="KW-0813">Transport</keyword>
<keyword id="KW-0830">Ubiquinone</keyword>
<reference key="1">
    <citation type="journal article" date="2006" name="DNA Seq.">
        <title>The complete nucleotide sequence of the mitochondrial genome of Tetraodon nigroviridis.</title>
        <authorList>
            <person name="Yue G.H."/>
            <person name="Lo L.C."/>
            <person name="Zhu Z.Y."/>
            <person name="Lin G."/>
            <person name="Feng F."/>
        </authorList>
    </citation>
    <scope>NUCLEOTIDE SEQUENCE [LARGE SCALE GENOMIC DNA]</scope>
</reference>
<proteinExistence type="inferred from homology"/>
<name>NU6M_TETNG</name>
<protein>
    <recommendedName>
        <fullName>NADH-ubiquinone oxidoreductase chain 6</fullName>
        <ecNumber>7.1.1.2</ecNumber>
    </recommendedName>
    <alternativeName>
        <fullName>NADH dehydrogenase subunit 6</fullName>
    </alternativeName>
</protein>
<comment type="function">
    <text evidence="1">Core subunit of the mitochondrial membrane respiratory chain NADH dehydrogenase (Complex I) that is believed to belong to the minimal assembly required for catalysis. Complex I functions in the transfer of electrons from NADH to the respiratory chain. The immediate electron acceptor for the enzyme is believed to be ubiquinone (By similarity).</text>
</comment>
<comment type="catalytic activity">
    <reaction>
        <text>a ubiquinone + NADH + 5 H(+)(in) = a ubiquinol + NAD(+) + 4 H(+)(out)</text>
        <dbReference type="Rhea" id="RHEA:29091"/>
        <dbReference type="Rhea" id="RHEA-COMP:9565"/>
        <dbReference type="Rhea" id="RHEA-COMP:9566"/>
        <dbReference type="ChEBI" id="CHEBI:15378"/>
        <dbReference type="ChEBI" id="CHEBI:16389"/>
        <dbReference type="ChEBI" id="CHEBI:17976"/>
        <dbReference type="ChEBI" id="CHEBI:57540"/>
        <dbReference type="ChEBI" id="CHEBI:57945"/>
        <dbReference type="EC" id="7.1.1.2"/>
    </reaction>
</comment>
<comment type="subcellular location">
    <subcellularLocation>
        <location evidence="3">Mitochondrion membrane</location>
        <topology evidence="3">Multi-pass membrane protein</topology>
    </subcellularLocation>
</comment>
<comment type="similarity">
    <text evidence="3">Belongs to the complex I subunit 6 family.</text>
</comment>
<geneLocation type="mitochondrion"/>
<dbReference type="EC" id="7.1.1.2"/>
<dbReference type="EMBL" id="DQ019313">
    <property type="protein sequence ID" value="AAY26170.1"/>
    <property type="molecule type" value="Genomic_DNA"/>
</dbReference>
<dbReference type="SMR" id="Q4JQH6"/>
<dbReference type="FunCoup" id="Q4JQH6">
    <property type="interactions" value="28"/>
</dbReference>
<dbReference type="STRING" id="99883.ENSTNIP00000000974"/>
<dbReference type="Ensembl" id="ENSTNIT00000003425.1">
    <property type="protein sequence ID" value="ENSTNIP00000000974.1"/>
    <property type="gene ID" value="ENSTNIG00000000217.1"/>
</dbReference>
<dbReference type="GeneTree" id="ENSGT00390000003988"/>
<dbReference type="HOGENOM" id="CLU_129718_0_0_1"/>
<dbReference type="InParanoid" id="Q4JQH6"/>
<dbReference type="OMA" id="WVIYDTG"/>
<dbReference type="TreeFam" id="TF343324"/>
<dbReference type="Proteomes" id="UP000007303">
    <property type="component" value="Mitochondrion"/>
</dbReference>
<dbReference type="GO" id="GO:0031966">
    <property type="term" value="C:mitochondrial membrane"/>
    <property type="evidence" value="ECO:0007669"/>
    <property type="project" value="UniProtKB-SubCell"/>
</dbReference>
<dbReference type="GO" id="GO:0008137">
    <property type="term" value="F:NADH dehydrogenase (ubiquinone) activity"/>
    <property type="evidence" value="ECO:0007669"/>
    <property type="project" value="UniProtKB-EC"/>
</dbReference>
<dbReference type="Gene3D" id="1.20.120.1200">
    <property type="entry name" value="NADH-ubiquinone/plastoquinone oxidoreductase chain 6, subunit NuoJ"/>
    <property type="match status" value="1"/>
</dbReference>
<dbReference type="InterPro" id="IPR050269">
    <property type="entry name" value="ComplexI_Subunit6"/>
</dbReference>
<dbReference type="InterPro" id="IPR001457">
    <property type="entry name" value="NADH_UbQ/plastoQ_OxRdtase_su6"/>
</dbReference>
<dbReference type="InterPro" id="IPR042106">
    <property type="entry name" value="Nuo/plastoQ_OxRdtase_6_NuoJ"/>
</dbReference>
<dbReference type="PANTHER" id="PTHR11435">
    <property type="entry name" value="NADH UBIQUINONE OXIDOREDUCTASE SUBUNIT ND6"/>
    <property type="match status" value="1"/>
</dbReference>
<dbReference type="PANTHER" id="PTHR11435:SF1">
    <property type="entry name" value="NADH-UBIQUINONE OXIDOREDUCTASE CHAIN 6"/>
    <property type="match status" value="1"/>
</dbReference>
<dbReference type="Pfam" id="PF00499">
    <property type="entry name" value="Oxidored_q3"/>
    <property type="match status" value="1"/>
</dbReference>